<protein>
    <recommendedName>
        <fullName evidence="1">Probable 4-deoxy-4-formamido-L-arabinose-phosphoundecaprenol deformylase ArnD</fullName>
        <ecNumber evidence="1">3.5.1.n3</ecNumber>
    </recommendedName>
</protein>
<sequence>MTKVGLRIDVDTFRGTREGVPRLLEILSKHNIQASIFFSVGPDNMGRHLWRLVKPRFLWKMLRSNAASLYGWDILLAGTAWPGKEIGHANADIIREAAKHHEVGLHAWDHHAWQAHSGNWDRQTMVDDIARGLRTLEEIIGQPVTCSAAAGWRADQQVIEAKEAFHLRYNSDCRGAMPFRPLLESGKPGTAQIPVTLPTWDEVIGRDVKAEDFNGWLLNRILRDKGMPVYTIHAEVEGCAYQHNFVDLLKRAAQEGVTFCPLSELLSGTLPLGQVVRGNIAGREGWLGCQQIAGSR</sequence>
<comment type="function">
    <text evidence="1">Catalyzes the deformylation of 4-deoxy-4-formamido-L-arabinose-phosphoundecaprenol to 4-amino-4-deoxy-L-arabinose-phosphoundecaprenol. The modified arabinose is attached to lipid A and is required for resistance to polymyxin and cationic antimicrobial peptides.</text>
</comment>
<comment type="catalytic activity">
    <reaction evidence="1">
        <text>4-deoxy-4-formamido-alpha-L-arabinopyranosyl di-trans,octa-cis-undecaprenyl phosphate + H2O = 4-amino-4-deoxy-alpha-L-arabinopyranosyl di-trans,octa-cis-undecaprenyl phosphate + formate</text>
        <dbReference type="Rhea" id="RHEA:27734"/>
        <dbReference type="ChEBI" id="CHEBI:15377"/>
        <dbReference type="ChEBI" id="CHEBI:15740"/>
        <dbReference type="ChEBI" id="CHEBI:58909"/>
        <dbReference type="ChEBI" id="CHEBI:60463"/>
        <dbReference type="EC" id="3.5.1.n3"/>
    </reaction>
</comment>
<comment type="pathway">
    <text evidence="1">Glycolipid biosynthesis; 4-amino-4-deoxy-alpha-L-arabinose undecaprenyl phosphate biosynthesis; 4-amino-4-deoxy-alpha-L-arabinose undecaprenyl phosphate from UDP-4-deoxy-4-formamido-beta-L-arabinose and undecaprenyl phosphate: step 2/2.</text>
</comment>
<comment type="pathway">
    <text evidence="1">Bacterial outer membrane biogenesis; lipopolysaccharide biosynthesis.</text>
</comment>
<comment type="similarity">
    <text evidence="1">Belongs to the polysaccharide deacetylase family. ArnD deformylase subfamily.</text>
</comment>
<keyword id="KW-0046">Antibiotic resistance</keyword>
<keyword id="KW-0378">Hydrolase</keyword>
<keyword id="KW-0441">Lipid A biosynthesis</keyword>
<keyword id="KW-0444">Lipid biosynthesis</keyword>
<keyword id="KW-0443">Lipid metabolism</keyword>
<keyword id="KW-0448">Lipopolysaccharide biosynthesis</keyword>
<evidence type="ECO:0000255" key="1">
    <source>
        <dbReference type="HAMAP-Rule" id="MF_01870"/>
    </source>
</evidence>
<proteinExistence type="inferred from homology"/>
<name>ARND_ECOLU</name>
<gene>
    <name evidence="1" type="primary">arnD</name>
    <name type="ordered locus">ECUMN_2597</name>
</gene>
<organism>
    <name type="scientific">Escherichia coli O17:K52:H18 (strain UMN026 / ExPEC)</name>
    <dbReference type="NCBI Taxonomy" id="585056"/>
    <lineage>
        <taxon>Bacteria</taxon>
        <taxon>Pseudomonadati</taxon>
        <taxon>Pseudomonadota</taxon>
        <taxon>Gammaproteobacteria</taxon>
        <taxon>Enterobacterales</taxon>
        <taxon>Enterobacteriaceae</taxon>
        <taxon>Escherichia</taxon>
    </lineage>
</organism>
<reference key="1">
    <citation type="journal article" date="2009" name="PLoS Genet.">
        <title>Organised genome dynamics in the Escherichia coli species results in highly diverse adaptive paths.</title>
        <authorList>
            <person name="Touchon M."/>
            <person name="Hoede C."/>
            <person name="Tenaillon O."/>
            <person name="Barbe V."/>
            <person name="Baeriswyl S."/>
            <person name="Bidet P."/>
            <person name="Bingen E."/>
            <person name="Bonacorsi S."/>
            <person name="Bouchier C."/>
            <person name="Bouvet O."/>
            <person name="Calteau A."/>
            <person name="Chiapello H."/>
            <person name="Clermont O."/>
            <person name="Cruveiller S."/>
            <person name="Danchin A."/>
            <person name="Diard M."/>
            <person name="Dossat C."/>
            <person name="Karoui M.E."/>
            <person name="Frapy E."/>
            <person name="Garry L."/>
            <person name="Ghigo J.M."/>
            <person name="Gilles A.M."/>
            <person name="Johnson J."/>
            <person name="Le Bouguenec C."/>
            <person name="Lescat M."/>
            <person name="Mangenot S."/>
            <person name="Martinez-Jehanne V."/>
            <person name="Matic I."/>
            <person name="Nassif X."/>
            <person name="Oztas S."/>
            <person name="Petit M.A."/>
            <person name="Pichon C."/>
            <person name="Rouy Z."/>
            <person name="Ruf C.S."/>
            <person name="Schneider D."/>
            <person name="Tourret J."/>
            <person name="Vacherie B."/>
            <person name="Vallenet D."/>
            <person name="Medigue C."/>
            <person name="Rocha E.P.C."/>
            <person name="Denamur E."/>
        </authorList>
    </citation>
    <scope>NUCLEOTIDE SEQUENCE [LARGE SCALE GENOMIC DNA]</scope>
    <source>
        <strain>UMN026 / ExPEC</strain>
    </source>
</reference>
<feature type="chain" id="PRO_0000383505" description="Probable 4-deoxy-4-formamido-L-arabinose-phosphoundecaprenol deformylase ArnD">
    <location>
        <begin position="1"/>
        <end position="296"/>
    </location>
</feature>
<feature type="domain" description="NodB homology" evidence="1">
    <location>
        <begin position="2"/>
        <end position="260"/>
    </location>
</feature>
<accession>B7N5M1</accession>
<dbReference type="EC" id="3.5.1.n3" evidence="1"/>
<dbReference type="EMBL" id="CU928163">
    <property type="protein sequence ID" value="CAR13780.1"/>
    <property type="molecule type" value="Genomic_DNA"/>
</dbReference>
<dbReference type="RefSeq" id="WP_000169749.1">
    <property type="nucleotide sequence ID" value="NC_011751.1"/>
</dbReference>
<dbReference type="RefSeq" id="YP_002413308.1">
    <property type="nucleotide sequence ID" value="NC_011751.1"/>
</dbReference>
<dbReference type="SMR" id="B7N5M1"/>
<dbReference type="STRING" id="585056.ECUMN_2597"/>
<dbReference type="KEGG" id="eum:ECUMN_2597"/>
<dbReference type="PATRIC" id="fig|585056.7.peg.2778"/>
<dbReference type="HOGENOM" id="CLU_084199_0_0_6"/>
<dbReference type="UniPathway" id="UPA00030"/>
<dbReference type="UniPathway" id="UPA00036">
    <property type="reaction ID" value="UER00496"/>
</dbReference>
<dbReference type="Proteomes" id="UP000007097">
    <property type="component" value="Chromosome"/>
</dbReference>
<dbReference type="GO" id="GO:0016020">
    <property type="term" value="C:membrane"/>
    <property type="evidence" value="ECO:0007669"/>
    <property type="project" value="GOC"/>
</dbReference>
<dbReference type="GO" id="GO:0016811">
    <property type="term" value="F:hydrolase activity, acting on carbon-nitrogen (but not peptide) bonds, in linear amides"/>
    <property type="evidence" value="ECO:0007669"/>
    <property type="project" value="UniProtKB-UniRule"/>
</dbReference>
<dbReference type="GO" id="GO:0036108">
    <property type="term" value="P:4-amino-4-deoxy-alpha-L-arabinopyranosyl undecaprenyl phosphate biosynthetic process"/>
    <property type="evidence" value="ECO:0007669"/>
    <property type="project" value="UniProtKB-UniRule"/>
</dbReference>
<dbReference type="GO" id="GO:0009245">
    <property type="term" value="P:lipid A biosynthetic process"/>
    <property type="evidence" value="ECO:0007669"/>
    <property type="project" value="UniProtKB-UniRule"/>
</dbReference>
<dbReference type="GO" id="GO:0009103">
    <property type="term" value="P:lipopolysaccharide biosynthetic process"/>
    <property type="evidence" value="ECO:0007669"/>
    <property type="project" value="UniProtKB-UniRule"/>
</dbReference>
<dbReference type="GO" id="GO:0046677">
    <property type="term" value="P:response to antibiotic"/>
    <property type="evidence" value="ECO:0007669"/>
    <property type="project" value="UniProtKB-KW"/>
</dbReference>
<dbReference type="CDD" id="cd10939">
    <property type="entry name" value="CE4_ArnD"/>
    <property type="match status" value="1"/>
</dbReference>
<dbReference type="Gene3D" id="3.20.20.370">
    <property type="entry name" value="Glycoside hydrolase/deacetylase"/>
    <property type="match status" value="1"/>
</dbReference>
<dbReference type="HAMAP" id="MF_01870">
    <property type="entry name" value="ArnD"/>
    <property type="match status" value="1"/>
</dbReference>
<dbReference type="InterPro" id="IPR023557">
    <property type="entry name" value="ArnD"/>
</dbReference>
<dbReference type="InterPro" id="IPR011330">
    <property type="entry name" value="Glyco_hydro/deAcase_b/a-brl"/>
</dbReference>
<dbReference type="InterPro" id="IPR002509">
    <property type="entry name" value="NODB_dom"/>
</dbReference>
<dbReference type="InterPro" id="IPR050248">
    <property type="entry name" value="Polysacc_deacetylase_ArnD"/>
</dbReference>
<dbReference type="NCBIfam" id="NF011923">
    <property type="entry name" value="PRK15394.1"/>
    <property type="match status" value="1"/>
</dbReference>
<dbReference type="PANTHER" id="PTHR10587:SF137">
    <property type="entry name" value="4-DEOXY-4-FORMAMIDO-L-ARABINOSE-PHOSPHOUNDECAPRENOL DEFORMYLASE ARND-RELATED"/>
    <property type="match status" value="1"/>
</dbReference>
<dbReference type="PANTHER" id="PTHR10587">
    <property type="entry name" value="GLYCOSYL TRANSFERASE-RELATED"/>
    <property type="match status" value="1"/>
</dbReference>
<dbReference type="Pfam" id="PF01522">
    <property type="entry name" value="Polysacc_deac_1"/>
    <property type="match status" value="1"/>
</dbReference>
<dbReference type="SUPFAM" id="SSF88713">
    <property type="entry name" value="Glycoside hydrolase/deacetylase"/>
    <property type="match status" value="1"/>
</dbReference>
<dbReference type="PROSITE" id="PS51677">
    <property type="entry name" value="NODB"/>
    <property type="match status" value="1"/>
</dbReference>